<proteinExistence type="inferred from homology"/>
<protein>
    <recommendedName>
        <fullName evidence="1">3-phosphoshikimate 1-carboxyvinyltransferase</fullName>
        <ecNumber evidence="1">2.5.1.19</ecNumber>
    </recommendedName>
    <alternativeName>
        <fullName evidence="1">5-enolpyruvylshikimate-3-phosphate synthase</fullName>
        <shortName evidence="1">EPSP synthase</shortName>
        <shortName evidence="1">EPSPS</shortName>
    </alternativeName>
</protein>
<dbReference type="EC" id="2.5.1.19" evidence="1"/>
<dbReference type="EMBL" id="BX897700">
    <property type="protein sequence ID" value="CAF25595.1"/>
    <property type="molecule type" value="Genomic_DNA"/>
</dbReference>
<dbReference type="RefSeq" id="WP_011178922.1">
    <property type="nucleotide sequence ID" value="NC_005955.1"/>
</dbReference>
<dbReference type="SMR" id="Q6G0X3"/>
<dbReference type="KEGG" id="bqu:BQ00880"/>
<dbReference type="eggNOG" id="COG0128">
    <property type="taxonomic scope" value="Bacteria"/>
</dbReference>
<dbReference type="HOGENOM" id="CLU_024321_0_1_5"/>
<dbReference type="OrthoDB" id="9809920at2"/>
<dbReference type="UniPathway" id="UPA00053">
    <property type="reaction ID" value="UER00089"/>
</dbReference>
<dbReference type="Proteomes" id="UP000000597">
    <property type="component" value="Chromosome"/>
</dbReference>
<dbReference type="GO" id="GO:0005737">
    <property type="term" value="C:cytoplasm"/>
    <property type="evidence" value="ECO:0007669"/>
    <property type="project" value="UniProtKB-SubCell"/>
</dbReference>
<dbReference type="GO" id="GO:0003866">
    <property type="term" value="F:3-phosphoshikimate 1-carboxyvinyltransferase activity"/>
    <property type="evidence" value="ECO:0007669"/>
    <property type="project" value="UniProtKB-UniRule"/>
</dbReference>
<dbReference type="GO" id="GO:0008652">
    <property type="term" value="P:amino acid biosynthetic process"/>
    <property type="evidence" value="ECO:0007669"/>
    <property type="project" value="UniProtKB-KW"/>
</dbReference>
<dbReference type="GO" id="GO:0009073">
    <property type="term" value="P:aromatic amino acid family biosynthetic process"/>
    <property type="evidence" value="ECO:0007669"/>
    <property type="project" value="UniProtKB-KW"/>
</dbReference>
<dbReference type="GO" id="GO:0009423">
    <property type="term" value="P:chorismate biosynthetic process"/>
    <property type="evidence" value="ECO:0007669"/>
    <property type="project" value="UniProtKB-UniRule"/>
</dbReference>
<dbReference type="CDD" id="cd01556">
    <property type="entry name" value="EPSP_synthase"/>
    <property type="match status" value="1"/>
</dbReference>
<dbReference type="FunFam" id="3.65.10.10:FF:000005">
    <property type="entry name" value="3-phosphoshikimate 1-carboxyvinyltransferase"/>
    <property type="match status" value="1"/>
</dbReference>
<dbReference type="FunFam" id="3.65.10.10:FF:000006">
    <property type="entry name" value="3-phosphoshikimate 1-carboxyvinyltransferase"/>
    <property type="match status" value="1"/>
</dbReference>
<dbReference type="Gene3D" id="3.65.10.10">
    <property type="entry name" value="Enolpyruvate transferase domain"/>
    <property type="match status" value="2"/>
</dbReference>
<dbReference type="HAMAP" id="MF_00210">
    <property type="entry name" value="EPSP_synth"/>
    <property type="match status" value="1"/>
</dbReference>
<dbReference type="InterPro" id="IPR001986">
    <property type="entry name" value="Enolpyruvate_Tfrase_dom"/>
</dbReference>
<dbReference type="InterPro" id="IPR036968">
    <property type="entry name" value="Enolpyruvate_Tfrase_sf"/>
</dbReference>
<dbReference type="InterPro" id="IPR006264">
    <property type="entry name" value="EPSP_synthase"/>
</dbReference>
<dbReference type="InterPro" id="IPR023193">
    <property type="entry name" value="EPSP_synthase_CS"/>
</dbReference>
<dbReference type="InterPro" id="IPR013792">
    <property type="entry name" value="RNA3'P_cycl/enolpyr_Trfase_a/b"/>
</dbReference>
<dbReference type="NCBIfam" id="TIGR01356">
    <property type="entry name" value="aroA"/>
    <property type="match status" value="1"/>
</dbReference>
<dbReference type="PANTHER" id="PTHR21090">
    <property type="entry name" value="AROM/DEHYDROQUINATE SYNTHASE"/>
    <property type="match status" value="1"/>
</dbReference>
<dbReference type="PANTHER" id="PTHR21090:SF5">
    <property type="entry name" value="PENTAFUNCTIONAL AROM POLYPEPTIDE"/>
    <property type="match status" value="1"/>
</dbReference>
<dbReference type="Pfam" id="PF00275">
    <property type="entry name" value="EPSP_synthase"/>
    <property type="match status" value="1"/>
</dbReference>
<dbReference type="PIRSF" id="PIRSF000505">
    <property type="entry name" value="EPSPS"/>
    <property type="match status" value="1"/>
</dbReference>
<dbReference type="SUPFAM" id="SSF55205">
    <property type="entry name" value="EPT/RTPC-like"/>
    <property type="match status" value="1"/>
</dbReference>
<dbReference type="PROSITE" id="PS00104">
    <property type="entry name" value="EPSP_SYNTHASE_1"/>
    <property type="match status" value="1"/>
</dbReference>
<feature type="chain" id="PRO_0000325335" description="3-phosphoshikimate 1-carboxyvinyltransferase">
    <location>
        <begin position="1"/>
        <end position="442"/>
    </location>
</feature>
<feature type="active site" description="Proton acceptor" evidence="1">
    <location>
        <position position="323"/>
    </location>
</feature>
<feature type="binding site" evidence="1">
    <location>
        <position position="25"/>
    </location>
    <ligand>
        <name>3-phosphoshikimate</name>
        <dbReference type="ChEBI" id="CHEBI:145989"/>
    </ligand>
</feature>
<feature type="binding site" evidence="1">
    <location>
        <position position="25"/>
    </location>
    <ligand>
        <name>phosphoenolpyruvate</name>
        <dbReference type="ChEBI" id="CHEBI:58702"/>
    </ligand>
</feature>
<feature type="binding site" evidence="1">
    <location>
        <position position="26"/>
    </location>
    <ligand>
        <name>3-phosphoshikimate</name>
        <dbReference type="ChEBI" id="CHEBI:145989"/>
    </ligand>
</feature>
<feature type="binding site" evidence="1">
    <location>
        <position position="30"/>
    </location>
    <ligand>
        <name>3-phosphoshikimate</name>
        <dbReference type="ChEBI" id="CHEBI:145989"/>
    </ligand>
</feature>
<feature type="binding site" evidence="1">
    <location>
        <position position="97"/>
    </location>
    <ligand>
        <name>phosphoenolpyruvate</name>
        <dbReference type="ChEBI" id="CHEBI:58702"/>
    </ligand>
</feature>
<feature type="binding site" evidence="1">
    <location>
        <position position="125"/>
    </location>
    <ligand>
        <name>phosphoenolpyruvate</name>
        <dbReference type="ChEBI" id="CHEBI:58702"/>
    </ligand>
</feature>
<feature type="binding site" evidence="1">
    <location>
        <position position="170"/>
    </location>
    <ligand>
        <name>3-phosphoshikimate</name>
        <dbReference type="ChEBI" id="CHEBI:145989"/>
    </ligand>
</feature>
<feature type="binding site" evidence="1">
    <location>
        <position position="172"/>
    </location>
    <ligand>
        <name>3-phosphoshikimate</name>
        <dbReference type="ChEBI" id="CHEBI:145989"/>
    </ligand>
</feature>
<feature type="binding site" evidence="1">
    <location>
        <position position="172"/>
    </location>
    <ligand>
        <name>phosphoenolpyruvate</name>
        <dbReference type="ChEBI" id="CHEBI:58702"/>
    </ligand>
</feature>
<feature type="binding site" evidence="1">
    <location>
        <position position="323"/>
    </location>
    <ligand>
        <name>3-phosphoshikimate</name>
        <dbReference type="ChEBI" id="CHEBI:145989"/>
    </ligand>
</feature>
<feature type="binding site" evidence="1">
    <location>
        <position position="350"/>
    </location>
    <ligand>
        <name>3-phosphoshikimate</name>
        <dbReference type="ChEBI" id="CHEBI:145989"/>
    </ligand>
</feature>
<feature type="binding site" evidence="1">
    <location>
        <position position="354"/>
    </location>
    <ligand>
        <name>phosphoenolpyruvate</name>
        <dbReference type="ChEBI" id="CHEBI:58702"/>
    </ligand>
</feature>
<feature type="binding site" evidence="1">
    <location>
        <position position="399"/>
    </location>
    <ligand>
        <name>phosphoenolpyruvate</name>
        <dbReference type="ChEBI" id="CHEBI:58702"/>
    </ligand>
</feature>
<comment type="function">
    <text evidence="1">Catalyzes the transfer of the enolpyruvyl moiety of phosphoenolpyruvate (PEP) to the 5-hydroxyl of shikimate-3-phosphate (S3P) to produce enolpyruvyl shikimate-3-phosphate and inorganic phosphate.</text>
</comment>
<comment type="catalytic activity">
    <reaction evidence="1">
        <text>3-phosphoshikimate + phosphoenolpyruvate = 5-O-(1-carboxyvinyl)-3-phosphoshikimate + phosphate</text>
        <dbReference type="Rhea" id="RHEA:21256"/>
        <dbReference type="ChEBI" id="CHEBI:43474"/>
        <dbReference type="ChEBI" id="CHEBI:57701"/>
        <dbReference type="ChEBI" id="CHEBI:58702"/>
        <dbReference type="ChEBI" id="CHEBI:145989"/>
        <dbReference type="EC" id="2.5.1.19"/>
    </reaction>
    <physiologicalReaction direction="left-to-right" evidence="1">
        <dbReference type="Rhea" id="RHEA:21257"/>
    </physiologicalReaction>
</comment>
<comment type="pathway">
    <text evidence="1">Metabolic intermediate biosynthesis; chorismate biosynthesis; chorismate from D-erythrose 4-phosphate and phosphoenolpyruvate: step 6/7.</text>
</comment>
<comment type="subunit">
    <text evidence="1">Monomer.</text>
</comment>
<comment type="subcellular location">
    <subcellularLocation>
        <location evidence="1">Cytoplasm</location>
    </subcellularLocation>
</comment>
<comment type="similarity">
    <text evidence="1">Belongs to the EPSP synthase family.</text>
</comment>
<keyword id="KW-0028">Amino-acid biosynthesis</keyword>
<keyword id="KW-0057">Aromatic amino acid biosynthesis</keyword>
<keyword id="KW-0963">Cytoplasm</keyword>
<keyword id="KW-0808">Transferase</keyword>
<name>AROA_BARQU</name>
<accession>Q6G0X3</accession>
<sequence length="442" mass="47538">MQKTTPITAYKSTCLSGKIKIPGDKSISHRSLILGGLANGETHIHGLLESDDVLNTAAAMQAMGACIIKKADRWIIRGTGNGCLLAAEKPLNFGNAGTGARLVMGMVGPYHMKTTFIGDASLSKRPMGRILNPLRLMGVEIEATHGDRLPLTLYGPKMANPIRYRIPIASAQVKSAILLAGLNTAGTTTVIEPILTRDHTEKMLKAFGAELEIKTDAEGTRFIHLNGQPHLTGQTIHIPGDPSSAAFPIIAALLVENSDITIENVLINKSRMGLIETLWEMDAKIELLNQHKTGGENVADLRVKSSMLKGVTVPKERAPSMIDEYPALAVAAAFAEGKTVMLGIDELRVKESDRLSALAQGLKINHVDCEEGKDFLIVHGKSSAKGLGGGHVTTHLDHRIAMSFLIFGLVSEKPVTIDDKRMIATSFPEFIPFIQQLGGKIS</sequence>
<reference key="1">
    <citation type="journal article" date="2004" name="Proc. Natl. Acad. Sci. U.S.A.">
        <title>The louse-borne human pathogen Bartonella quintana is a genomic derivative of the zoonotic agent Bartonella henselae.</title>
        <authorList>
            <person name="Alsmark U.C.M."/>
            <person name="Frank A.C."/>
            <person name="Karlberg E.O."/>
            <person name="Legault B.-A."/>
            <person name="Ardell D.H."/>
            <person name="Canbaeck B."/>
            <person name="Eriksson A.-S."/>
            <person name="Naeslund A.K."/>
            <person name="Handley S.A."/>
            <person name="Huvet M."/>
            <person name="La Scola B."/>
            <person name="Holmberg M."/>
            <person name="Andersson S.G.E."/>
        </authorList>
    </citation>
    <scope>NUCLEOTIDE SEQUENCE [LARGE SCALE GENOMIC DNA]</scope>
    <source>
        <strain>Toulouse</strain>
    </source>
</reference>
<gene>
    <name evidence="1" type="primary">aroA</name>
    <name type="ordered locus">BQ00880</name>
</gene>
<organism>
    <name type="scientific">Bartonella quintana (strain Toulouse)</name>
    <name type="common">Rochalimaea quintana</name>
    <dbReference type="NCBI Taxonomy" id="283165"/>
    <lineage>
        <taxon>Bacteria</taxon>
        <taxon>Pseudomonadati</taxon>
        <taxon>Pseudomonadota</taxon>
        <taxon>Alphaproteobacteria</taxon>
        <taxon>Hyphomicrobiales</taxon>
        <taxon>Bartonellaceae</taxon>
        <taxon>Bartonella</taxon>
    </lineage>
</organism>
<evidence type="ECO:0000255" key="1">
    <source>
        <dbReference type="HAMAP-Rule" id="MF_00210"/>
    </source>
</evidence>